<name>TYSY_MYCPA</name>
<reference key="1">
    <citation type="journal article" date="2005" name="Proc. Natl. Acad. Sci. U.S.A.">
        <title>The complete genome sequence of Mycobacterium avium subspecies paratuberculosis.</title>
        <authorList>
            <person name="Li L."/>
            <person name="Bannantine J.P."/>
            <person name="Zhang Q."/>
            <person name="Amonsin A."/>
            <person name="May B.J."/>
            <person name="Alt D."/>
            <person name="Banerji N."/>
            <person name="Kanjilal S."/>
            <person name="Kapur V."/>
        </authorList>
    </citation>
    <scope>NUCLEOTIDE SEQUENCE [LARGE SCALE GENOMIC DNA]</scope>
    <source>
        <strain>ATCC BAA-968 / K-10</strain>
    </source>
</reference>
<keyword id="KW-0963">Cytoplasm</keyword>
<keyword id="KW-0489">Methyltransferase</keyword>
<keyword id="KW-0545">Nucleotide biosynthesis</keyword>
<keyword id="KW-1185">Reference proteome</keyword>
<keyword id="KW-0808">Transferase</keyword>
<proteinExistence type="inferred from homology"/>
<comment type="function">
    <text evidence="1">Catalyzes the reductive methylation of 2'-deoxyuridine-5'-monophosphate (dUMP) to 2'-deoxythymidine-5'-monophosphate (dTMP) while utilizing 5,10-methylenetetrahydrofolate (mTHF) as the methyl donor and reductant in the reaction, yielding dihydrofolate (DHF) as a by-product. This enzymatic reaction provides an intracellular de novo source of dTMP, an essential precursor for DNA biosynthesis.</text>
</comment>
<comment type="catalytic activity">
    <reaction evidence="1">
        <text>dUMP + (6R)-5,10-methylene-5,6,7,8-tetrahydrofolate = 7,8-dihydrofolate + dTMP</text>
        <dbReference type="Rhea" id="RHEA:12104"/>
        <dbReference type="ChEBI" id="CHEBI:15636"/>
        <dbReference type="ChEBI" id="CHEBI:57451"/>
        <dbReference type="ChEBI" id="CHEBI:63528"/>
        <dbReference type="ChEBI" id="CHEBI:246422"/>
        <dbReference type="EC" id="2.1.1.45"/>
    </reaction>
</comment>
<comment type="pathway">
    <text evidence="1">Pyrimidine metabolism; dTTP biosynthesis.</text>
</comment>
<comment type="subunit">
    <text evidence="1">Homodimer.</text>
</comment>
<comment type="subcellular location">
    <subcellularLocation>
        <location evidence="1">Cytoplasm</location>
    </subcellularLocation>
</comment>
<comment type="similarity">
    <text evidence="1">Belongs to the thymidylate synthase family. Bacterial-type ThyA subfamily.</text>
</comment>
<feature type="chain" id="PRO_0000140985" description="Thymidylate synthase">
    <location>
        <begin position="1"/>
        <end position="266"/>
    </location>
</feature>
<feature type="active site" description="Nucleophile" evidence="1">
    <location>
        <position position="149"/>
    </location>
</feature>
<feature type="binding site" description="in other chain" evidence="1">
    <location>
        <position position="24"/>
    </location>
    <ligand>
        <name>dUMP</name>
        <dbReference type="ChEBI" id="CHEBI:246422"/>
        <note>ligand shared between dimeric partners</note>
    </ligand>
</feature>
<feature type="binding site" evidence="1">
    <location>
        <position position="54"/>
    </location>
    <ligand>
        <name>(6R)-5,10-methylene-5,6,7,8-tetrahydrofolate</name>
        <dbReference type="ChEBI" id="CHEBI:15636"/>
    </ligand>
</feature>
<feature type="binding site" evidence="1">
    <location>
        <begin position="129"/>
        <end position="130"/>
    </location>
    <ligand>
        <name>dUMP</name>
        <dbReference type="ChEBI" id="CHEBI:246422"/>
        <note>ligand shared between dimeric partners</note>
    </ligand>
</feature>
<feature type="binding site" description="in other chain" evidence="1">
    <location>
        <begin position="169"/>
        <end position="172"/>
    </location>
    <ligand>
        <name>dUMP</name>
        <dbReference type="ChEBI" id="CHEBI:246422"/>
        <note>ligand shared between dimeric partners</note>
    </ligand>
</feature>
<feature type="binding site" evidence="1">
    <location>
        <position position="172"/>
    </location>
    <ligand>
        <name>(6R)-5,10-methylene-5,6,7,8-tetrahydrofolate</name>
        <dbReference type="ChEBI" id="CHEBI:15636"/>
    </ligand>
</feature>
<feature type="binding site" description="in other chain" evidence="1">
    <location>
        <position position="180"/>
    </location>
    <ligand>
        <name>dUMP</name>
        <dbReference type="ChEBI" id="CHEBI:246422"/>
        <note>ligand shared between dimeric partners</note>
    </ligand>
</feature>
<feature type="binding site" description="in other chain" evidence="1">
    <location>
        <begin position="210"/>
        <end position="212"/>
    </location>
    <ligand>
        <name>dUMP</name>
        <dbReference type="ChEBI" id="CHEBI:246422"/>
        <note>ligand shared between dimeric partners</note>
    </ligand>
</feature>
<feature type="binding site" evidence="1">
    <location>
        <position position="265"/>
    </location>
    <ligand>
        <name>(6R)-5,10-methylene-5,6,7,8-tetrahydrofolate</name>
        <dbReference type="ChEBI" id="CHEBI:15636"/>
    </ligand>
</feature>
<gene>
    <name evidence="1" type="primary">thyA</name>
    <name type="ordered locus">MAP_2869c</name>
</gene>
<protein>
    <recommendedName>
        <fullName evidence="1">Thymidylate synthase</fullName>
        <shortName evidence="1">TS</shortName>
        <shortName evidence="1">TSase</shortName>
        <ecNumber evidence="1">2.1.1.45</ecNumber>
    </recommendedName>
</protein>
<dbReference type="EC" id="2.1.1.45" evidence="1"/>
<dbReference type="EMBL" id="AE016958">
    <property type="protein sequence ID" value="AAS05186.1"/>
    <property type="molecule type" value="Genomic_DNA"/>
</dbReference>
<dbReference type="RefSeq" id="WP_003875188.1">
    <property type="nucleotide sequence ID" value="NZ_CP106873.1"/>
</dbReference>
<dbReference type="SMR" id="Q73VZ2"/>
<dbReference type="STRING" id="262316.MAP_2869c"/>
<dbReference type="KEGG" id="mpa:MAP_2869c"/>
<dbReference type="PATRIC" id="fig|262316.17.peg.3039"/>
<dbReference type="eggNOG" id="COG0207">
    <property type="taxonomic scope" value="Bacteria"/>
</dbReference>
<dbReference type="HOGENOM" id="CLU_021669_0_0_11"/>
<dbReference type="UniPathway" id="UPA00575"/>
<dbReference type="Proteomes" id="UP000000580">
    <property type="component" value="Chromosome"/>
</dbReference>
<dbReference type="GO" id="GO:0005829">
    <property type="term" value="C:cytosol"/>
    <property type="evidence" value="ECO:0007669"/>
    <property type="project" value="TreeGrafter"/>
</dbReference>
<dbReference type="GO" id="GO:0004799">
    <property type="term" value="F:thymidylate synthase activity"/>
    <property type="evidence" value="ECO:0007669"/>
    <property type="project" value="UniProtKB-UniRule"/>
</dbReference>
<dbReference type="GO" id="GO:0006231">
    <property type="term" value="P:dTMP biosynthetic process"/>
    <property type="evidence" value="ECO:0007669"/>
    <property type="project" value="UniProtKB-UniRule"/>
</dbReference>
<dbReference type="GO" id="GO:0006235">
    <property type="term" value="P:dTTP biosynthetic process"/>
    <property type="evidence" value="ECO:0007669"/>
    <property type="project" value="UniProtKB-UniRule"/>
</dbReference>
<dbReference type="GO" id="GO:0032259">
    <property type="term" value="P:methylation"/>
    <property type="evidence" value="ECO:0007669"/>
    <property type="project" value="UniProtKB-KW"/>
</dbReference>
<dbReference type="CDD" id="cd00351">
    <property type="entry name" value="TS_Pyrimidine_HMase"/>
    <property type="match status" value="1"/>
</dbReference>
<dbReference type="FunFam" id="3.30.572.10:FF:000001">
    <property type="entry name" value="Thymidylate synthase"/>
    <property type="match status" value="1"/>
</dbReference>
<dbReference type="Gene3D" id="3.30.572.10">
    <property type="entry name" value="Thymidylate synthase/dCMP hydroxymethylase domain"/>
    <property type="match status" value="1"/>
</dbReference>
<dbReference type="HAMAP" id="MF_00008">
    <property type="entry name" value="Thymidy_synth_bact"/>
    <property type="match status" value="1"/>
</dbReference>
<dbReference type="InterPro" id="IPR045097">
    <property type="entry name" value="Thymidate_synth/dCMP_Mease"/>
</dbReference>
<dbReference type="InterPro" id="IPR023451">
    <property type="entry name" value="Thymidate_synth/dCMP_Mease_dom"/>
</dbReference>
<dbReference type="InterPro" id="IPR036926">
    <property type="entry name" value="Thymidate_synth/dCMP_Mease_sf"/>
</dbReference>
<dbReference type="InterPro" id="IPR000398">
    <property type="entry name" value="Thymidylate_synthase"/>
</dbReference>
<dbReference type="InterPro" id="IPR020940">
    <property type="entry name" value="Thymidylate_synthase_AS"/>
</dbReference>
<dbReference type="NCBIfam" id="NF002497">
    <property type="entry name" value="PRK01827.1-3"/>
    <property type="match status" value="1"/>
</dbReference>
<dbReference type="NCBIfam" id="NF002499">
    <property type="entry name" value="PRK01827.1-5"/>
    <property type="match status" value="1"/>
</dbReference>
<dbReference type="NCBIfam" id="TIGR03284">
    <property type="entry name" value="thym_sym"/>
    <property type="match status" value="2"/>
</dbReference>
<dbReference type="PANTHER" id="PTHR11548:SF9">
    <property type="entry name" value="THYMIDYLATE SYNTHASE"/>
    <property type="match status" value="1"/>
</dbReference>
<dbReference type="PANTHER" id="PTHR11548">
    <property type="entry name" value="THYMIDYLATE SYNTHASE 1"/>
    <property type="match status" value="1"/>
</dbReference>
<dbReference type="Pfam" id="PF00303">
    <property type="entry name" value="Thymidylat_synt"/>
    <property type="match status" value="1"/>
</dbReference>
<dbReference type="PRINTS" id="PR00108">
    <property type="entry name" value="THYMDSNTHASE"/>
</dbReference>
<dbReference type="SUPFAM" id="SSF55831">
    <property type="entry name" value="Thymidylate synthase/dCMP hydroxymethylase"/>
    <property type="match status" value="1"/>
</dbReference>
<dbReference type="PROSITE" id="PS00091">
    <property type="entry name" value="THYMIDYLATE_SYNTHASE"/>
    <property type="match status" value="1"/>
</dbReference>
<evidence type="ECO:0000255" key="1">
    <source>
        <dbReference type="HAMAP-Rule" id="MF_00008"/>
    </source>
</evidence>
<accession>Q73VZ2</accession>
<organism>
    <name type="scientific">Mycolicibacterium paratuberculosis (strain ATCC BAA-968 / K-10)</name>
    <name type="common">Mycobacterium paratuberculosis</name>
    <dbReference type="NCBI Taxonomy" id="262316"/>
    <lineage>
        <taxon>Bacteria</taxon>
        <taxon>Bacillati</taxon>
        <taxon>Actinomycetota</taxon>
        <taxon>Actinomycetes</taxon>
        <taxon>Mycobacteriales</taxon>
        <taxon>Mycobacteriaceae</taxon>
        <taxon>Mycobacterium</taxon>
        <taxon>Mycobacterium avium complex (MAC)</taxon>
    </lineage>
</organism>
<sequence length="266" mass="30148">MPIPTPYEDLLRLVLDRGTAKSDRTGTGTRSLFGQQLRYDLSAGFPLITTKKVHLKSVVYELLWFLRGDSNVDWLHRHGVTIWDEWASDTGDLGPIYGVQWRSWPTPSGEHIDQISAALDLLRTDPDSRRIIVSAWNVGEIPRMALPPCHAFFQFYVADGRLSCQLYQRSADLFLGVPFNIASYALLTHMMAAQAGLSVGEFVWTGGDCHIYDNHVEQVRLQLSREPRPYPELILAHRDSIFDYTYDDVVVHNYDPHPAIKAPVAV</sequence>